<protein>
    <recommendedName>
        <fullName>UPF0390 protein C24B10.18</fullName>
    </recommendedName>
</protein>
<sequence length="93" mass="10007">MAQGEFKKKKNSSANKGGRVTKHSKNPKKGARYCAPRRAAAIKDHTINANITKTLNVRNEKLIAGIASQQVGKLTITKALGEAGAKELKEGKH</sequence>
<feature type="chain" id="PRO_0000255470" description="UPF0390 protein C24B10.18">
    <location>
        <begin position="1"/>
        <end position="93"/>
    </location>
</feature>
<feature type="region of interest" description="Disordered" evidence="1">
    <location>
        <begin position="1"/>
        <end position="32"/>
    </location>
</feature>
<feature type="compositionally biased region" description="Basic residues" evidence="1">
    <location>
        <begin position="19"/>
        <end position="31"/>
    </location>
</feature>
<organism>
    <name type="scientific">Schizosaccharomyces pombe (strain 972 / ATCC 24843)</name>
    <name type="common">Fission yeast</name>
    <dbReference type="NCBI Taxonomy" id="284812"/>
    <lineage>
        <taxon>Eukaryota</taxon>
        <taxon>Fungi</taxon>
        <taxon>Dikarya</taxon>
        <taxon>Ascomycota</taxon>
        <taxon>Taphrinomycotina</taxon>
        <taxon>Schizosaccharomycetes</taxon>
        <taxon>Schizosaccharomycetales</taxon>
        <taxon>Schizosaccharomycetaceae</taxon>
        <taxon>Schizosaccharomyces</taxon>
    </lineage>
</organism>
<accession>Q9P7I8</accession>
<keyword id="KW-1185">Reference proteome</keyword>
<reference key="1">
    <citation type="journal article" date="2002" name="Nature">
        <title>The genome sequence of Schizosaccharomyces pombe.</title>
        <authorList>
            <person name="Wood V."/>
            <person name="Gwilliam R."/>
            <person name="Rajandream M.A."/>
            <person name="Lyne M.H."/>
            <person name="Lyne R."/>
            <person name="Stewart A."/>
            <person name="Sgouros J.G."/>
            <person name="Peat N."/>
            <person name="Hayles J."/>
            <person name="Baker S.G."/>
            <person name="Basham D."/>
            <person name="Bowman S."/>
            <person name="Brooks K."/>
            <person name="Brown D."/>
            <person name="Brown S."/>
            <person name="Chillingworth T."/>
            <person name="Churcher C.M."/>
            <person name="Collins M."/>
            <person name="Connor R."/>
            <person name="Cronin A."/>
            <person name="Davis P."/>
            <person name="Feltwell T."/>
            <person name="Fraser A."/>
            <person name="Gentles S."/>
            <person name="Goble A."/>
            <person name="Hamlin N."/>
            <person name="Harris D.E."/>
            <person name="Hidalgo J."/>
            <person name="Hodgson G."/>
            <person name="Holroyd S."/>
            <person name="Hornsby T."/>
            <person name="Howarth S."/>
            <person name="Huckle E.J."/>
            <person name="Hunt S."/>
            <person name="Jagels K."/>
            <person name="James K.D."/>
            <person name="Jones L."/>
            <person name="Jones M."/>
            <person name="Leather S."/>
            <person name="McDonald S."/>
            <person name="McLean J."/>
            <person name="Mooney P."/>
            <person name="Moule S."/>
            <person name="Mungall K.L."/>
            <person name="Murphy L.D."/>
            <person name="Niblett D."/>
            <person name="Odell C."/>
            <person name="Oliver K."/>
            <person name="O'Neil S."/>
            <person name="Pearson D."/>
            <person name="Quail M.A."/>
            <person name="Rabbinowitsch E."/>
            <person name="Rutherford K.M."/>
            <person name="Rutter S."/>
            <person name="Saunders D."/>
            <person name="Seeger K."/>
            <person name="Sharp S."/>
            <person name="Skelton J."/>
            <person name="Simmonds M.N."/>
            <person name="Squares R."/>
            <person name="Squares S."/>
            <person name="Stevens K."/>
            <person name="Taylor K."/>
            <person name="Taylor R.G."/>
            <person name="Tivey A."/>
            <person name="Walsh S.V."/>
            <person name="Warren T."/>
            <person name="Whitehead S."/>
            <person name="Woodward J.R."/>
            <person name="Volckaert G."/>
            <person name="Aert R."/>
            <person name="Robben J."/>
            <person name="Grymonprez B."/>
            <person name="Weltjens I."/>
            <person name="Vanstreels E."/>
            <person name="Rieger M."/>
            <person name="Schaefer M."/>
            <person name="Mueller-Auer S."/>
            <person name="Gabel C."/>
            <person name="Fuchs M."/>
            <person name="Duesterhoeft A."/>
            <person name="Fritzc C."/>
            <person name="Holzer E."/>
            <person name="Moestl D."/>
            <person name="Hilbert H."/>
            <person name="Borzym K."/>
            <person name="Langer I."/>
            <person name="Beck A."/>
            <person name="Lehrach H."/>
            <person name="Reinhardt R."/>
            <person name="Pohl T.M."/>
            <person name="Eger P."/>
            <person name="Zimmermann W."/>
            <person name="Wedler H."/>
            <person name="Wambutt R."/>
            <person name="Purnelle B."/>
            <person name="Goffeau A."/>
            <person name="Cadieu E."/>
            <person name="Dreano S."/>
            <person name="Gloux S."/>
            <person name="Lelaure V."/>
            <person name="Mottier S."/>
            <person name="Galibert F."/>
            <person name="Aves S.J."/>
            <person name="Xiang Z."/>
            <person name="Hunt C."/>
            <person name="Moore K."/>
            <person name="Hurst S.M."/>
            <person name="Lucas M."/>
            <person name="Rochet M."/>
            <person name="Gaillardin C."/>
            <person name="Tallada V.A."/>
            <person name="Garzon A."/>
            <person name="Thode G."/>
            <person name="Daga R.R."/>
            <person name="Cruzado L."/>
            <person name="Jimenez J."/>
            <person name="Sanchez M."/>
            <person name="del Rey F."/>
            <person name="Benito J."/>
            <person name="Dominguez A."/>
            <person name="Revuelta J.L."/>
            <person name="Moreno S."/>
            <person name="Armstrong J."/>
            <person name="Forsburg S.L."/>
            <person name="Cerutti L."/>
            <person name="Lowe T."/>
            <person name="McCombie W.R."/>
            <person name="Paulsen I."/>
            <person name="Potashkin J."/>
            <person name="Shpakovski G.V."/>
            <person name="Ussery D."/>
            <person name="Barrell B.G."/>
            <person name="Nurse P."/>
        </authorList>
    </citation>
    <scope>NUCLEOTIDE SEQUENCE [LARGE SCALE GENOMIC DNA]</scope>
    <source>
        <strain>972 / ATCC 24843</strain>
    </source>
</reference>
<comment type="similarity">
    <text evidence="2">Belongs to the UPF0390 family.</text>
</comment>
<gene>
    <name type="ORF">SPCC24B10.18</name>
</gene>
<dbReference type="EMBL" id="CU329672">
    <property type="protein sequence ID" value="CAB76227.1"/>
    <property type="molecule type" value="Genomic_DNA"/>
</dbReference>
<dbReference type="PIR" id="T50425">
    <property type="entry name" value="T50425"/>
</dbReference>
<dbReference type="RefSeq" id="NP_588021.1">
    <property type="nucleotide sequence ID" value="NM_001023012.2"/>
</dbReference>
<dbReference type="SMR" id="Q9P7I8"/>
<dbReference type="BioGRID" id="275670">
    <property type="interactions" value="29"/>
</dbReference>
<dbReference type="STRING" id="284812.Q9P7I8"/>
<dbReference type="PaxDb" id="4896-SPCC24B10.18.1"/>
<dbReference type="EnsemblFungi" id="SPCC24B10.18.1">
    <property type="protein sequence ID" value="SPCC24B10.18.1:pep"/>
    <property type="gene ID" value="SPCC24B10.18"/>
</dbReference>
<dbReference type="KEGG" id="spo:2539098"/>
<dbReference type="PomBase" id="SPCC24B10.18"/>
<dbReference type="VEuPathDB" id="FungiDB:SPCC24B10.18"/>
<dbReference type="HOGENOM" id="CLU_2400938_0_0_1"/>
<dbReference type="InParanoid" id="Q9P7I8"/>
<dbReference type="OMA" id="KGARYCA"/>
<dbReference type="PRO" id="PR:Q9P7I8"/>
<dbReference type="Proteomes" id="UP000002485">
    <property type="component" value="Chromosome III"/>
</dbReference>
<dbReference type="GO" id="GO:0005730">
    <property type="term" value="C:nucleolus"/>
    <property type="evidence" value="ECO:0007005"/>
    <property type="project" value="PomBase"/>
</dbReference>
<dbReference type="GO" id="GO:0005634">
    <property type="term" value="C:nucleus"/>
    <property type="evidence" value="ECO:0007005"/>
    <property type="project" value="PomBase"/>
</dbReference>
<dbReference type="InterPro" id="IPR019034">
    <property type="entry name" value="UPF0390"/>
</dbReference>
<dbReference type="Pfam" id="PF09495">
    <property type="entry name" value="DUF2462"/>
    <property type="match status" value="1"/>
</dbReference>
<proteinExistence type="inferred from homology"/>
<evidence type="ECO:0000256" key="1">
    <source>
        <dbReference type="SAM" id="MobiDB-lite"/>
    </source>
</evidence>
<evidence type="ECO:0000305" key="2"/>
<name>U390_SCHPO</name>